<feature type="chain" id="PRO_0000410608" description="ORF-B protein">
    <location>
        <begin position="1"/>
        <end position="306"/>
    </location>
</feature>
<feature type="transmembrane region" description="Helical" evidence="1">
    <location>
        <begin position="92"/>
        <end position="112"/>
    </location>
</feature>
<feature type="transmembrane region" description="Helical" evidence="1">
    <location>
        <begin position="120"/>
        <end position="140"/>
    </location>
</feature>
<feature type="transmembrane region" description="Helical" evidence="1">
    <location>
        <begin position="161"/>
        <end position="181"/>
    </location>
</feature>
<dbReference type="EMBL" id="L41838">
    <property type="protein sequence ID" value="AAA99529.1"/>
    <property type="molecule type" value="Genomic_RNA"/>
</dbReference>
<dbReference type="EMBL" id="AF033822">
    <property type="protein sequence ID" value="AAC82610.1"/>
    <property type="molecule type" value="Genomic_RNA"/>
</dbReference>
<dbReference type="PIR" id="T09397">
    <property type="entry name" value="T09397"/>
</dbReference>
<dbReference type="RefSeq" id="NP_045941.1">
    <property type="nucleotide sequence ID" value="NC_001867.1"/>
</dbReference>
<dbReference type="GeneID" id="1403499"/>
<dbReference type="KEGG" id="vg:1403499"/>
<dbReference type="Proteomes" id="UP000007081">
    <property type="component" value="Segment"/>
</dbReference>
<dbReference type="Proteomes" id="UP000008337">
    <property type="component" value="Genome"/>
</dbReference>
<dbReference type="GO" id="GO:0030430">
    <property type="term" value="C:host cell cytoplasm"/>
    <property type="evidence" value="ECO:0007669"/>
    <property type="project" value="UniProtKB-SubCell"/>
</dbReference>
<dbReference type="GO" id="GO:0020002">
    <property type="term" value="C:host cell plasma membrane"/>
    <property type="evidence" value="ECO:0007669"/>
    <property type="project" value="UniProtKB-SubCell"/>
</dbReference>
<dbReference type="GO" id="GO:0016020">
    <property type="term" value="C:membrane"/>
    <property type="evidence" value="ECO:0007669"/>
    <property type="project" value="UniProtKB-KW"/>
</dbReference>
<sequence length="306" mass="34971">MFSDSDSSDEELSRIITDIDESPQDIQQSLHLRAGVSPEARVPPGGLTQEEWTIDYFSTYHTPLLNPGIPHELTQRCTDYTASILRRASAKMIQWDYVFYLLPRVWIMFPFIAREGLSHLTHLLTLTTSVLSATSLVFGWDLTVIELCNEMNIQGVYLPEVIEWLAQFSFLFTHVTLIVVSDGMMDLLLMFPMDIEEQPLAINIALHALQTSYTIMTPILFASPLLRIISCVLYACGHCPSARMLYAYTIMNRYTGESIAEMHTGFRCFRDQMIAYDMEFTNFLRDLTEEETPVLEITEPEPSPTE</sequence>
<evidence type="ECO:0000255" key="1"/>
<evidence type="ECO:0000269" key="2">
    <source>
    </source>
</evidence>
<evidence type="ECO:0000269" key="3">
    <source>
    </source>
</evidence>
<evidence type="ECO:0000305" key="4"/>
<name>ORFB_WDSV</name>
<keyword id="KW-1032">Host cell membrane</keyword>
<keyword id="KW-1035">Host cytoplasm</keyword>
<keyword id="KW-1043">Host membrane</keyword>
<keyword id="KW-0472">Membrane</keyword>
<keyword id="KW-1185">Reference proteome</keyword>
<keyword id="KW-0812">Transmembrane</keyword>
<keyword id="KW-1133">Transmembrane helix</keyword>
<protein>
    <recommendedName>
        <fullName>ORF-B protein</fullName>
    </recommendedName>
</protein>
<organismHost>
    <name type="scientific">Sander vitreus</name>
    <name type="common">Walleye</name>
    <name type="synonym">Perca vitrea</name>
    <dbReference type="NCBI Taxonomy" id="283036"/>
</organismHost>
<organism>
    <name type="scientific">Walleye dermal sarcoma virus</name>
    <name type="common">WDSV</name>
    <dbReference type="NCBI Taxonomy" id="39720"/>
    <lineage>
        <taxon>Viruses</taxon>
        <taxon>Riboviria</taxon>
        <taxon>Pararnavirae</taxon>
        <taxon>Artverviricota</taxon>
        <taxon>Revtraviricetes</taxon>
        <taxon>Ortervirales</taxon>
        <taxon>Retroviridae</taxon>
        <taxon>Orthoretrovirinae</taxon>
        <taxon>Epsilonretrovirus</taxon>
    </lineage>
</organism>
<reference key="1">
    <citation type="journal article" date="1995" name="J. Virol.">
        <title>Nucleotide sequence and protein analysis of a complex piscine retrovirus, walleye dermal sarcoma virus.</title>
        <authorList>
            <person name="Holzschu D.L."/>
            <person name="Martineau D."/>
            <person name="Fodor S.K."/>
            <person name="Vogt V.M."/>
            <person name="Bowser P.R."/>
            <person name="Casey J.W."/>
        </authorList>
    </citation>
    <scope>NUCLEOTIDE SEQUENCE [GENOMIC RNA]</scope>
</reference>
<reference key="2">
    <citation type="submission" date="1997-11" db="EMBL/GenBank/DDBJ databases">
        <authorList>
            <person name="Chappey C."/>
        </authorList>
    </citation>
    <scope>NUCLEOTIDE SEQUENCE [GENOMIC RNA]</scope>
</reference>
<reference key="3">
    <citation type="journal article" date="2007" name="J. Gen. Virol.">
        <title>Establishment of productively infected walleye dermal sarcoma explant cells.</title>
        <authorList>
            <person name="Rovnak J."/>
            <person name="Casey R.N."/>
            <person name="Brewster C.D."/>
            <person name="Casey J.W."/>
            <person name="Quackenbush S.L."/>
        </authorList>
    </citation>
    <scope>SUBCELLULAR LOCATION</scope>
</reference>
<reference key="4">
    <citation type="journal article" date="2008" name="Virology">
        <title>Walleye dermal sarcoma virus Orf B functions through receptor for activated C kinase (RACK1) and protein kinase C.</title>
        <authorList>
            <person name="Daniels C.C."/>
            <person name="Rovnak J."/>
            <person name="Quackenbush S.L."/>
        </authorList>
    </citation>
    <scope>INTERACTION WITH WALLEYE RACK1</scope>
</reference>
<comment type="subunit">
    <text evidence="3">Interacts with host RACK1.</text>
</comment>
<comment type="subcellular location">
    <subcellularLocation>
        <location evidence="2">Host cytoplasm</location>
    </subcellularLocation>
    <subcellularLocation>
        <location evidence="4">Host cell membrane</location>
        <topology evidence="4">Multi-pass membrane protein</topology>
    </subcellularLocation>
</comment>
<proteinExistence type="evidence at protein level"/>
<accession>Q88940</accession>